<comment type="function">
    <text evidence="1">Capsid protein self assembles to form an icosahedral capsid with a T=3 symmetry, about 38 nm in diameter, and consisting of 180 capsid proteins. A smaller form of capsid with a diameter of 23 nm might be capsid proteins assembled as icosahedron with T=1 symmetry. The capsid encapsulates the genomic RNA and is decorated with VP2 proteins. Attaches virion to target cells by binding to feline junctional adhesion molecule A (F11R) and/or to alpha-2,6-linked sialic acid. Once attached, the virion is endocytosed. Acidification of the endosome induces conformational change of capsid protein thereby injecting virus genomic RNA into host cytoplasm.</text>
</comment>
<comment type="function">
    <molecule>Capsid leader protein</molecule>
    <text evidence="1">May function as a viroporin.</text>
</comment>
<comment type="subunit">
    <text evidence="1 3 4">Homodimer (By similarity). Homomultimer (By similarity). Interacts with the minor capsid protein VP2 (By similarity). May bind to VP3 and Vpg proteins. Binds to alpha-2,6-linked sialic acid at surface of target cells (By similarity). Interacts with host F11R/JAM-1/JAM-A; this interaction allows viral binding and entry into the host cell (PubMed:16611908).</text>
</comment>
<comment type="subunit">
    <molecule>Capsid leader protein</molecule>
    <text evidence="1">Homooligomer; probably disulfide-linked.</text>
</comment>
<comment type="subcellular location">
    <molecule>Mature capsid protein</molecule>
    <subcellularLocation>
        <location evidence="2">Virion</location>
    </subcellularLocation>
    <subcellularLocation>
        <location>Host cytoplasm</location>
    </subcellularLocation>
</comment>
<comment type="PTM">
    <molecule>Capsid protein VP1</molecule>
    <text evidence="1">Cleaved by the viral protease to produce mature capsid protein (By similarity). Cleaved by host caspase-2 and caspase-6 to generate protein p40, this might be linked to the cytopathic effect of the capsid leader protein (By similarity).</text>
</comment>
<comment type="miscellaneous">
    <text evidence="1">Mostly expressed from a sgRNA. Expression from the g-RNA is low and occurs at a downstream start codon generating a smaller, truncated LC-VP1 (tLC-VP1) protein.</text>
</comment>
<comment type="similarity">
    <text evidence="5">Belongs to the caliciviridae capsid protein family.</text>
</comment>
<feature type="chain" id="PRO_0000460230" description="Capsid protein VP1">
    <location>
        <begin position="1"/>
        <end position="668"/>
    </location>
</feature>
<feature type="chain" id="PRO_0000460231" description="Capsid leader protein">
    <location>
        <begin position="1"/>
        <end position="124"/>
    </location>
</feature>
<feature type="chain" id="PRO_0000036877" description="Mature capsid protein">
    <location>
        <begin position="125"/>
        <end position="668"/>
    </location>
</feature>
<feature type="chain" id="PRO_0000341980" description="Protein 40k">
    <location>
        <begin position="465" status="uncertain"/>
        <end position="668"/>
    </location>
</feature>
<feature type="site" description="Cleavage; by viral protease" evidence="1">
    <location>
        <begin position="124"/>
        <end position="125"/>
    </location>
</feature>
<feature type="site" description="Cleavage; by viral proteases" evidence="2">
    <location>
        <begin position="124"/>
        <end position="125"/>
    </location>
</feature>
<feature type="site" description="Interaction with host receptor F11R/JAM-1" evidence="1">
    <location>
        <position position="459"/>
    </location>
</feature>
<feature type="site" description="Interaction with host receptor F11R/JAM-1" evidence="1">
    <location>
        <position position="462"/>
    </location>
</feature>
<organismHost>
    <name type="scientific">Felidae</name>
    <name type="common">cat family</name>
    <dbReference type="NCBI Taxonomy" id="9681"/>
</organismHost>
<protein>
    <recommendedName>
        <fullName>Capsid protein VP1</fullName>
        <shortName>CP</shortName>
    </recommendedName>
    <alternativeName>
        <fullName>Coat protein</fullName>
    </alternativeName>
    <alternativeName>
        <fullName evidence="2">Protein 73 kDa</fullName>
    </alternativeName>
    <component>
        <recommendedName>
            <fullName evidence="2">Capsid leader protein</fullName>
            <shortName evidence="2">LC</shortName>
        </recommendedName>
        <alternativeName>
            <fullName evidence="2">Protein 14 kDa</fullName>
        </alternativeName>
    </component>
    <component>
        <recommendedName>
            <fullName>Mature capsid protein</fullName>
        </recommendedName>
        <alternativeName>
            <fullName evidence="2">Protein 59 kDa</fullName>
        </alternativeName>
    </component>
    <component>
        <recommendedName>
            <fullName>Protein 40k</fullName>
            <shortName>p40</shortName>
        </recommendedName>
    </component>
</protein>
<sequence length="668" mass="73589">MCSTCANVLKYYDWDPHFRLIINPNKFLPIGFCDNPLMCCYPDLLPEFGTVWDCDQSPLQIYLESILGDDEWASTHEAIDPSVPPMHWDSAGKIFQPHPGVLMHHLIGEVAKAWDPNLPLFRLEADDGSITTPEQGTAVGGVIAEPSAQMSTAADMASGKSVDSEWEAFFSFHTSVNWSTSETQGKILFKQSLGPLLNPYLEHLSKLYVAWSGSIEVRFSISGSGVFGGKLAAIVVPPGVDPVQSTSMLQYPHVLFDARQVEPVIFTIPDLRSTLYHVMSDTDTTSLVIMVYNDLINPYANDSNSSGCIVTVETKPGPDFKFHLLKPPGSVLTHGSIPSDLIPKSSSLWIGNRYWTDITDFVIRPFVFQANRHFDFNQETAGWSTPRFRPITITISEKNGSKLGIGVATDYIIPGIPDGWPDTTIADKLIPAGDYSITTGEGNDIKTAQAYDTAAVVKNTTNFRGMYICGSLQRAWGDKKISNTAFITTAIRDGNEIKPSNTIDMTKLAVYQDTHVEQEVQTSDDTLALLGYTGIGEEAIGSNRDRVVRISVLPEAGARGGNHPIFYKNSIKLGYVIRSIDVFNSQILHTSRQLSLNHYLLPPDSFAVYRIIDSNGSWFDIGIDSEGFSFVGVSDIGKLEFPLSASYMGIQLAKIRLASNIRSRMTKL</sequence>
<proteinExistence type="evidence at protein level"/>
<organism>
    <name type="scientific">Feline calicivirus (strain Japanese F4)</name>
    <name type="common">FCV</name>
    <dbReference type="NCBI Taxonomy" id="11980"/>
    <lineage>
        <taxon>Viruses</taxon>
        <taxon>Riboviria</taxon>
        <taxon>Orthornavirae</taxon>
        <taxon>Pisuviricota</taxon>
        <taxon>Pisoniviricetes</taxon>
        <taxon>Picornavirales</taxon>
        <taxon>Caliciviridae</taxon>
        <taxon>Vesivirus</taxon>
        <taxon>Feline calicivirus</taxon>
    </lineage>
</organism>
<keyword id="KW-0167">Capsid protein</keyword>
<keyword id="KW-1015">Disulfide bond</keyword>
<keyword id="KW-1035">Host cytoplasm</keyword>
<keyword id="KW-1142">T=3 icosahedral capsid protein</keyword>
<keyword id="KW-0946">Virion</keyword>
<accession>P27405</accession>
<dbReference type="EMBL" id="D90357">
    <property type="protein sequence ID" value="BAA14371.1"/>
    <property type="molecule type" value="Genomic_RNA"/>
</dbReference>
<dbReference type="PIR" id="B40481">
    <property type="entry name" value="VCWWFC"/>
</dbReference>
<dbReference type="SMR" id="P27405"/>
<dbReference type="Proteomes" id="UP000008668">
    <property type="component" value="Genome"/>
</dbReference>
<dbReference type="GO" id="GO:0030430">
    <property type="term" value="C:host cell cytoplasm"/>
    <property type="evidence" value="ECO:0007669"/>
    <property type="project" value="UniProtKB-SubCell"/>
</dbReference>
<dbReference type="GO" id="GO:0039617">
    <property type="term" value="C:T=3 icosahedral viral capsid"/>
    <property type="evidence" value="ECO:0007669"/>
    <property type="project" value="UniProtKB-KW"/>
</dbReference>
<dbReference type="CDD" id="cd00205">
    <property type="entry name" value="rhv_like"/>
    <property type="match status" value="1"/>
</dbReference>
<dbReference type="Gene3D" id="2.60.120.20">
    <property type="match status" value="1"/>
</dbReference>
<dbReference type="InterPro" id="IPR004005">
    <property type="entry name" value="Calicivirus_coat"/>
</dbReference>
<dbReference type="InterPro" id="IPR033703">
    <property type="entry name" value="Rhv-like"/>
</dbReference>
<dbReference type="InterPro" id="IPR029053">
    <property type="entry name" value="Viral_coat"/>
</dbReference>
<dbReference type="Pfam" id="PF00915">
    <property type="entry name" value="Calici_coat"/>
    <property type="match status" value="1"/>
</dbReference>
<dbReference type="SUPFAM" id="SSF88633">
    <property type="entry name" value="Positive stranded ssRNA viruses"/>
    <property type="match status" value="1"/>
</dbReference>
<reference key="1">
    <citation type="journal article" date="1991" name="Virology">
        <title>Sequence analysis of the 3'-end of feline calicivirus genome.</title>
        <authorList>
            <person name="Tohya Y."/>
            <person name="Taniguchi Y."/>
            <person name="Takahashi E."/>
            <person name="Utagawa E."/>
            <person name="Takeda N."/>
            <person name="Miyamura K."/>
            <person name="Yamazaki S."/>
            <person name="Mikami T."/>
        </authorList>
    </citation>
    <scope>NUCLEOTIDE SEQUENCE [GENOMIC RNA]</scope>
</reference>
<reference key="2">
    <citation type="journal article" date="2006" name="J. Virol.">
        <title>Junctional adhesion molecule 1 is a functional receptor for feline calicivirus.</title>
        <authorList>
            <person name="Makino A."/>
            <person name="Shimojima M."/>
            <person name="Miyazawa T."/>
            <person name="Kato K."/>
            <person name="Tohya Y."/>
            <person name="Akashi H."/>
        </authorList>
    </citation>
    <scope>INTERACTION WITH HOST RECEPTOR F11R/JAM-1</scope>
</reference>
<evidence type="ECO:0000250" key="1">
    <source>
        <dbReference type="UniProtKB" id="P27406"/>
    </source>
</evidence>
<evidence type="ECO:0000250" key="2">
    <source>
        <dbReference type="UniProtKB" id="Q66915"/>
    </source>
</evidence>
<evidence type="ECO:0000250" key="3">
    <source>
        <dbReference type="UniProtKB" id="Q83884"/>
    </source>
</evidence>
<evidence type="ECO:0000269" key="4">
    <source>
    </source>
</evidence>
<evidence type="ECO:0000305" key="5"/>
<name>CAPSD_FCVF4</name>
<gene>
    <name type="ORF">ORF2</name>
</gene>